<organism>
    <name type="scientific">Rhodopseudomonas palustris (strain BisB18)</name>
    <dbReference type="NCBI Taxonomy" id="316056"/>
    <lineage>
        <taxon>Bacteria</taxon>
        <taxon>Pseudomonadati</taxon>
        <taxon>Pseudomonadota</taxon>
        <taxon>Alphaproteobacteria</taxon>
        <taxon>Hyphomicrobiales</taxon>
        <taxon>Nitrobacteraceae</taxon>
        <taxon>Rhodopseudomonas</taxon>
    </lineage>
</organism>
<accession>Q21CT6</accession>
<protein>
    <recommendedName>
        <fullName evidence="1">Large ribosomal subunit protein bL19</fullName>
    </recommendedName>
    <alternativeName>
        <fullName evidence="2">50S ribosomal protein L19</fullName>
    </alternativeName>
</protein>
<comment type="function">
    <text evidence="1">This protein is located at the 30S-50S ribosomal subunit interface and may play a role in the structure and function of the aminoacyl-tRNA binding site.</text>
</comment>
<comment type="similarity">
    <text evidence="1">Belongs to the bacterial ribosomal protein bL19 family.</text>
</comment>
<keyword id="KW-0687">Ribonucleoprotein</keyword>
<keyword id="KW-0689">Ribosomal protein</keyword>
<evidence type="ECO:0000255" key="1">
    <source>
        <dbReference type="HAMAP-Rule" id="MF_00402"/>
    </source>
</evidence>
<evidence type="ECO:0000305" key="2"/>
<gene>
    <name evidence="1" type="primary">rplS</name>
    <name type="ordered locus">RPC_0225</name>
</gene>
<proteinExistence type="inferred from homology"/>
<sequence>MNLIQELEKEQFDKLSAGKVIPEFGPGDTVIVNVKVVEGERSRVQAYEGVCIGRSGGGINESFTVRKISYGEGVERVFPLLSPMIDSIKVVRRGKVRRAKLYYLRDLRGKSARIVEKKQDRPAKVVAGAAE</sequence>
<name>RL19_RHOPB</name>
<feature type="chain" id="PRO_0000252535" description="Large ribosomal subunit protein bL19">
    <location>
        <begin position="1"/>
        <end position="131"/>
    </location>
</feature>
<reference key="1">
    <citation type="submission" date="2006-03" db="EMBL/GenBank/DDBJ databases">
        <title>Complete sequence of Rhodopseudomonas palustris BisB18.</title>
        <authorList>
            <consortium name="US DOE Joint Genome Institute"/>
            <person name="Copeland A."/>
            <person name="Lucas S."/>
            <person name="Lapidus A."/>
            <person name="Barry K."/>
            <person name="Detter J.C."/>
            <person name="Glavina del Rio T."/>
            <person name="Hammon N."/>
            <person name="Israni S."/>
            <person name="Dalin E."/>
            <person name="Tice H."/>
            <person name="Pitluck S."/>
            <person name="Chain P."/>
            <person name="Malfatti S."/>
            <person name="Shin M."/>
            <person name="Vergez L."/>
            <person name="Schmutz J."/>
            <person name="Larimer F."/>
            <person name="Land M."/>
            <person name="Hauser L."/>
            <person name="Pelletier D.A."/>
            <person name="Kyrpides N."/>
            <person name="Anderson I."/>
            <person name="Oda Y."/>
            <person name="Harwood C.S."/>
            <person name="Richardson P."/>
        </authorList>
    </citation>
    <scope>NUCLEOTIDE SEQUENCE [LARGE SCALE GENOMIC DNA]</scope>
    <source>
        <strain>BisB18</strain>
    </source>
</reference>
<dbReference type="EMBL" id="CP000301">
    <property type="protein sequence ID" value="ABD85800.1"/>
    <property type="molecule type" value="Genomic_DNA"/>
</dbReference>
<dbReference type="SMR" id="Q21CT6"/>
<dbReference type="STRING" id="316056.RPC_0225"/>
<dbReference type="KEGG" id="rpc:RPC_0225"/>
<dbReference type="eggNOG" id="COG0335">
    <property type="taxonomic scope" value="Bacteria"/>
</dbReference>
<dbReference type="HOGENOM" id="CLU_103507_2_1_5"/>
<dbReference type="OrthoDB" id="9803541at2"/>
<dbReference type="GO" id="GO:0022625">
    <property type="term" value="C:cytosolic large ribosomal subunit"/>
    <property type="evidence" value="ECO:0007669"/>
    <property type="project" value="TreeGrafter"/>
</dbReference>
<dbReference type="GO" id="GO:0003735">
    <property type="term" value="F:structural constituent of ribosome"/>
    <property type="evidence" value="ECO:0007669"/>
    <property type="project" value="InterPro"/>
</dbReference>
<dbReference type="GO" id="GO:0006412">
    <property type="term" value="P:translation"/>
    <property type="evidence" value="ECO:0007669"/>
    <property type="project" value="UniProtKB-UniRule"/>
</dbReference>
<dbReference type="FunFam" id="2.30.30.790:FF:000001">
    <property type="entry name" value="50S ribosomal protein L19"/>
    <property type="match status" value="1"/>
</dbReference>
<dbReference type="Gene3D" id="2.30.30.790">
    <property type="match status" value="1"/>
</dbReference>
<dbReference type="HAMAP" id="MF_00402">
    <property type="entry name" value="Ribosomal_bL19"/>
    <property type="match status" value="1"/>
</dbReference>
<dbReference type="InterPro" id="IPR001857">
    <property type="entry name" value="Ribosomal_bL19"/>
</dbReference>
<dbReference type="InterPro" id="IPR018257">
    <property type="entry name" value="Ribosomal_bL19_CS"/>
</dbReference>
<dbReference type="InterPro" id="IPR038657">
    <property type="entry name" value="Ribosomal_bL19_sf"/>
</dbReference>
<dbReference type="InterPro" id="IPR008991">
    <property type="entry name" value="Translation_prot_SH3-like_sf"/>
</dbReference>
<dbReference type="NCBIfam" id="TIGR01024">
    <property type="entry name" value="rplS_bact"/>
    <property type="match status" value="1"/>
</dbReference>
<dbReference type="PANTHER" id="PTHR15680:SF9">
    <property type="entry name" value="LARGE RIBOSOMAL SUBUNIT PROTEIN BL19M"/>
    <property type="match status" value="1"/>
</dbReference>
<dbReference type="PANTHER" id="PTHR15680">
    <property type="entry name" value="RIBOSOMAL PROTEIN L19"/>
    <property type="match status" value="1"/>
</dbReference>
<dbReference type="Pfam" id="PF01245">
    <property type="entry name" value="Ribosomal_L19"/>
    <property type="match status" value="1"/>
</dbReference>
<dbReference type="PIRSF" id="PIRSF002191">
    <property type="entry name" value="Ribosomal_L19"/>
    <property type="match status" value="1"/>
</dbReference>
<dbReference type="PRINTS" id="PR00061">
    <property type="entry name" value="RIBOSOMALL19"/>
</dbReference>
<dbReference type="SUPFAM" id="SSF50104">
    <property type="entry name" value="Translation proteins SH3-like domain"/>
    <property type="match status" value="1"/>
</dbReference>
<dbReference type="PROSITE" id="PS01015">
    <property type="entry name" value="RIBOSOMAL_L19"/>
    <property type="match status" value="1"/>
</dbReference>